<feature type="signal peptide" evidence="2">
    <location>
        <begin position="1"/>
        <end position="22"/>
    </location>
</feature>
<feature type="chain" id="PRO_0000003812" description="Cadherin-17">
    <location>
        <begin position="23"/>
        <end position="832"/>
    </location>
</feature>
<feature type="topological domain" description="Extracellular" evidence="2">
    <location>
        <begin position="23"/>
        <end position="787"/>
    </location>
</feature>
<feature type="transmembrane region" description="Helical" evidence="2">
    <location>
        <begin position="788"/>
        <end position="808"/>
    </location>
</feature>
<feature type="topological domain" description="Cytoplasmic" evidence="2">
    <location>
        <begin position="809"/>
        <end position="832"/>
    </location>
</feature>
<feature type="domain" description="Cadherin 1" evidence="3">
    <location>
        <begin position="30"/>
        <end position="128"/>
    </location>
</feature>
<feature type="domain" description="Cadherin 2" evidence="3">
    <location>
        <begin position="129"/>
        <end position="244"/>
    </location>
</feature>
<feature type="domain" description="Cadherin 3" evidence="3">
    <location>
        <begin position="245"/>
        <end position="340"/>
    </location>
</feature>
<feature type="domain" description="Cadherin 4" evidence="3">
    <location>
        <begin position="341"/>
        <end position="449"/>
    </location>
</feature>
<feature type="domain" description="Cadherin 5" evidence="3">
    <location>
        <begin position="450"/>
        <end position="566"/>
    </location>
</feature>
<feature type="domain" description="Cadherin 6" evidence="3">
    <location>
        <begin position="567"/>
        <end position="667"/>
    </location>
</feature>
<feature type="domain" description="Cadherin 7" evidence="3">
    <location>
        <begin position="668"/>
        <end position="777"/>
    </location>
</feature>
<feature type="glycosylation site" description="N-linked (GlcNAc...) asparagine" evidence="2">
    <location>
        <position position="149"/>
    </location>
</feature>
<feature type="glycosylation site" description="N-linked (GlcNAc...) asparagine" evidence="2">
    <location>
        <position position="184"/>
    </location>
</feature>
<feature type="glycosylation site" description="N-linked (GlcNAc...) asparagine" evidence="2">
    <location>
        <position position="250"/>
    </location>
</feature>
<feature type="glycosylation site" description="N-linked (GlcNAc...) asparagine" evidence="2">
    <location>
        <position position="419"/>
    </location>
</feature>
<feature type="glycosylation site" description="N-linked (GlcNAc...) asparagine" evidence="2">
    <location>
        <position position="456"/>
    </location>
</feature>
<feature type="glycosylation site" description="N-linked (GlcNAc...) asparagine" evidence="2">
    <location>
        <position position="546"/>
    </location>
</feature>
<feature type="glycosylation site" description="N-linked (GlcNAc...) asparagine" evidence="2">
    <location>
        <position position="587"/>
    </location>
</feature>
<feature type="glycosylation site" description="N-linked (GlcNAc...) asparagine" evidence="2">
    <location>
        <position position="722"/>
    </location>
</feature>
<feature type="sequence variant" id="VAR_055567" description="In dbSNP:rs2243518." evidence="4 5">
    <original>K</original>
    <variation>E</variation>
    <location>
        <position position="115"/>
    </location>
</feature>
<feature type="sequence variant" id="VAR_031694" description="In dbSNP:rs1131829." evidence="6">
    <original>I</original>
    <variation>T</variation>
    <location>
        <position position="446"/>
    </location>
</feature>
<feature type="sequence variant" id="VAR_031695" description="In dbSNP:rs1051623." evidence="4 5">
    <original>E</original>
    <variation>D</variation>
    <location>
        <position position="734"/>
    </location>
</feature>
<feature type="sequence variant" id="VAR_031696" description="In dbSNP:rs1051624.">
    <original>E</original>
    <variation>A</variation>
    <location>
        <position position="739"/>
    </location>
</feature>
<feature type="strand" evidence="8">
    <location>
        <begin position="28"/>
        <end position="32"/>
    </location>
</feature>
<feature type="strand" evidence="10">
    <location>
        <begin position="34"/>
        <end position="41"/>
    </location>
</feature>
<feature type="strand" evidence="10">
    <location>
        <begin position="48"/>
        <end position="50"/>
    </location>
</feature>
<feature type="strand" evidence="10">
    <location>
        <begin position="59"/>
        <end position="65"/>
    </location>
</feature>
<feature type="turn" evidence="10">
    <location>
        <begin position="67"/>
        <end position="69"/>
    </location>
</feature>
<feature type="strand" evidence="10">
    <location>
        <begin position="70"/>
        <end position="72"/>
    </location>
</feature>
<feature type="strand" evidence="10">
    <location>
        <begin position="76"/>
        <end position="80"/>
    </location>
</feature>
<feature type="turn" evidence="10">
    <location>
        <begin position="86"/>
        <end position="88"/>
    </location>
</feature>
<feature type="strand" evidence="10">
    <location>
        <begin position="90"/>
        <end position="99"/>
    </location>
</feature>
<feature type="strand" evidence="10">
    <location>
        <begin position="105"/>
        <end position="117"/>
    </location>
</feature>
<feature type="strand" evidence="10">
    <location>
        <begin position="125"/>
        <end position="127"/>
    </location>
</feature>
<feature type="strand" evidence="10">
    <location>
        <begin position="129"/>
        <end position="136"/>
    </location>
</feature>
<feature type="strand" evidence="8">
    <location>
        <begin position="145"/>
        <end position="147"/>
    </location>
</feature>
<feature type="helix" evidence="10">
    <location>
        <begin position="159"/>
        <end position="161"/>
    </location>
</feature>
<feature type="strand" evidence="10">
    <location>
        <begin position="164"/>
        <end position="172"/>
    </location>
</feature>
<feature type="strand" evidence="10">
    <location>
        <begin position="180"/>
        <end position="182"/>
    </location>
</feature>
<feature type="turn" evidence="10">
    <location>
        <begin position="184"/>
        <end position="186"/>
    </location>
</feature>
<feature type="strand" evidence="10">
    <location>
        <begin position="188"/>
        <end position="191"/>
    </location>
</feature>
<feature type="helix" evidence="10">
    <location>
        <begin position="193"/>
        <end position="198"/>
    </location>
</feature>
<feature type="turn" evidence="10">
    <location>
        <begin position="201"/>
        <end position="203"/>
    </location>
</feature>
<feature type="strand" evidence="10">
    <location>
        <begin position="206"/>
        <end position="215"/>
    </location>
</feature>
<feature type="helix" evidence="10">
    <location>
        <begin position="216"/>
        <end position="218"/>
    </location>
</feature>
<feature type="strand" evidence="8">
    <location>
        <begin position="221"/>
        <end position="223"/>
    </location>
</feature>
<feature type="strand" evidence="10">
    <location>
        <begin position="225"/>
        <end position="235"/>
    </location>
</feature>
<feature type="strand" evidence="9">
    <location>
        <begin position="245"/>
        <end position="250"/>
    </location>
</feature>
<feature type="strand" evidence="9">
    <location>
        <begin position="257"/>
        <end position="261"/>
    </location>
</feature>
<feature type="strand" evidence="9">
    <location>
        <begin position="270"/>
        <end position="277"/>
    </location>
</feature>
<feature type="strand" evidence="9">
    <location>
        <begin position="284"/>
        <end position="286"/>
    </location>
</feature>
<feature type="strand" evidence="9">
    <location>
        <begin position="290"/>
        <end position="294"/>
    </location>
</feature>
<feature type="turn" evidence="9">
    <location>
        <begin position="300"/>
        <end position="302"/>
    </location>
</feature>
<feature type="strand" evidence="9">
    <location>
        <begin position="304"/>
        <end position="313"/>
    </location>
</feature>
<feature type="strand" evidence="9">
    <location>
        <begin position="324"/>
        <end position="331"/>
    </location>
</feature>
<feature type="strand" evidence="9">
    <location>
        <begin position="341"/>
        <end position="350"/>
    </location>
</feature>
<feature type="strand" evidence="9">
    <location>
        <begin position="358"/>
        <end position="361"/>
    </location>
</feature>
<feature type="turn" evidence="9">
    <location>
        <begin position="373"/>
        <end position="375"/>
    </location>
</feature>
<feature type="strand" evidence="9">
    <location>
        <begin position="378"/>
        <end position="386"/>
    </location>
</feature>
<feature type="strand" evidence="9">
    <location>
        <begin position="394"/>
        <end position="396"/>
    </location>
</feature>
<feature type="turn" evidence="9">
    <location>
        <begin position="398"/>
        <end position="400"/>
    </location>
</feature>
<feature type="strand" evidence="9">
    <location>
        <begin position="402"/>
        <end position="405"/>
    </location>
</feature>
<feature type="turn" evidence="9">
    <location>
        <begin position="412"/>
        <end position="414"/>
    </location>
</feature>
<feature type="strand" evidence="9">
    <location>
        <begin position="416"/>
        <end position="425"/>
    </location>
</feature>
<feature type="strand" evidence="9">
    <location>
        <begin position="430"/>
        <end position="440"/>
    </location>
</feature>
<organism>
    <name type="scientific">Homo sapiens</name>
    <name type="common">Human</name>
    <dbReference type="NCBI Taxonomy" id="9606"/>
    <lineage>
        <taxon>Eukaryota</taxon>
        <taxon>Metazoa</taxon>
        <taxon>Chordata</taxon>
        <taxon>Craniata</taxon>
        <taxon>Vertebrata</taxon>
        <taxon>Euteleostomi</taxon>
        <taxon>Mammalia</taxon>
        <taxon>Eutheria</taxon>
        <taxon>Euarchontoglires</taxon>
        <taxon>Primates</taxon>
        <taxon>Haplorrhini</taxon>
        <taxon>Catarrhini</taxon>
        <taxon>Hominidae</taxon>
        <taxon>Homo</taxon>
    </lineage>
</organism>
<sequence length="832" mass="92219">MILQAHLHSLCLLMLYLATGYGQEGKFSGPLKPMTFSIYEGQEPSQIIFQFKANPPAVTFELTGETDNIFVIEREGLLYYNRALDRETRSTHNLQVAALDANGIIVEGPVPITIKVKDINDNRPTFLQSKYEGSVRQNSRPGKPFLYVNATDLDDPATPNGQLYYQIVIQLPMINNVMYFQINNKTGAISLTREGSQELNPAKNPSYNLVISVKDMGGQSENSFSDTTSVDIIVTENIWKAPKPVEMVENSTDPHPIKITQVRWNDPGAQYSLVDKEKLPRFPFSIDQEGDIYVTQPLDREEKDAYVFYAVAKDEYGKPLSYPLEIHVKVKDINDNPPTCPSPVTVFEVQENERLGNSIGTLTAHDRDEENTANSFLNYRIVEQTPKLPMDGLFLIQTYAGMLQLAKQSLKKQDTPQYNLTIEVSDKDFKTLCFVQINVIDINDQIPIFEKSDYGNLTLAEDTNIGSTILTIQATDADEPFTGSSKILYHIIKGDSEGRLGVDTDPHTNTGYVIIKKPLDFETAAVSNIVFKAENPEPLVFGVKYNASSFAKFTLIVTDVNEAPQFSQHVFQAKVSEDVAIGTKVGNVTAKDPEGLDISYSLRGDTRGWLKIDHVTGEIFSVAPLDREAGSPYRVQVVATEVGGSSLSSVSEFHLILMDVNDNPPRLAKDYTGLFFCHPLSAPGSLIFEATDDDQHLFRGPHFTFSLGSGSLQNDWEVSKINGTHARLSTRHTEFEEREYVVLIRINDGGRPPLEGIVSLPVTFCSCVEGSCFRPAGHQTGIPTVGMAVGILLTTLLVIGIILAVVFIRIKKDKGKDNVESAQASEVKPLRS</sequence>
<name>CAD17_HUMAN</name>
<gene>
    <name type="primary">CDH17</name>
</gene>
<accession>Q12864</accession>
<accession>Q15336</accession>
<accession>Q2M2E0</accession>
<comment type="function">
    <text evidence="5">Cadherins are calcium-dependent cell adhesion proteins. They preferentially interact with themselves in a homophilic manner in connecting cells; cadherins may thus contribute to the sorting of heterogeneous cell types. LI-cadherin may have a role in the morphological organization of liver and intestine. Involved in intestinal peptide transport.</text>
</comment>
<comment type="interaction">
    <interactant intactId="EBI-12278850">
        <id>Q12864</id>
    </interactant>
    <interactant intactId="EBI-947187">
        <id>Q9UHD9</id>
        <label>UBQLN2</label>
    </interactant>
    <organismsDiffer>false</organismsDiffer>
    <experiments>3</experiments>
</comment>
<comment type="subcellular location">
    <subcellularLocation>
        <location evidence="7">Cell membrane</location>
        <topology evidence="7">Single-pass type I membrane protein</topology>
    </subcellularLocation>
</comment>
<comment type="tissue specificity">
    <text evidence="5">Expressed in the gastrointestinal tract and pancreatic duct. Not detected in kidney, lung, liver, brain, adrenal gland and skin.</text>
</comment>
<comment type="domain">
    <text evidence="1">Three calcium ions are usually bound at the interface of each cadherin domain and rigidify the connections, imparting a strong curvature to the full-length ectodomain.</text>
</comment>
<comment type="online information" name="Atlas of Genetics and Cytogenetics in Oncology and Haematology">
    <link uri="https://atlasgeneticsoncology.org/gene/40020/CDH17"/>
</comment>
<keyword id="KW-0002">3D-structure</keyword>
<keyword id="KW-0106">Calcium</keyword>
<keyword id="KW-0130">Cell adhesion</keyword>
<keyword id="KW-1003">Cell membrane</keyword>
<keyword id="KW-0325">Glycoprotein</keyword>
<keyword id="KW-0472">Membrane</keyword>
<keyword id="KW-0479">Metal-binding</keyword>
<keyword id="KW-1267">Proteomics identification</keyword>
<keyword id="KW-1185">Reference proteome</keyword>
<keyword id="KW-0677">Repeat</keyword>
<keyword id="KW-0732">Signal</keyword>
<keyword id="KW-0812">Transmembrane</keyword>
<keyword id="KW-1133">Transmembrane helix</keyword>
<keyword id="KW-0813">Transport</keyword>
<reference key="1">
    <citation type="journal article" date="1994" name="Science">
        <title>Association of intestinal peptide transport with a protein related to the cadherin superfamily.</title>
        <authorList>
            <person name="Dantzig A.H."/>
            <person name="Hoskins J."/>
            <person name="Tabas L.B."/>
            <person name="Bright S."/>
            <person name="Shepard R.L."/>
            <person name="Jenkins I.L."/>
            <person name="Duckworth D.C."/>
            <person name="Sportsman J.R."/>
            <person name="MacKensen D."/>
            <person name="Rosteck P.R. Jr."/>
            <person name="Skatrud P.L."/>
        </authorList>
    </citation>
    <scope>NUCLEOTIDE SEQUENCE [MRNA]</scope>
    <scope>FUNCTION</scope>
    <scope>TISSUE SPECIFICITY</scope>
    <scope>VARIANTS GLU-115 AND ASP-734</scope>
    <source>
        <tissue>Colon adenocarcinoma</tissue>
    </source>
</reference>
<reference key="2">
    <citation type="submission" date="1994-12" db="EMBL/GenBank/DDBJ databases">
        <title>Molecular cloning of human LI-cadherin: evidence for a novel type of cadherin within the cadherin superfamily.</title>
        <authorList>
            <person name="Boettinger A."/>
            <person name="Kreft B."/>
            <person name="Fieger C."/>
            <person name="Dlouhy B."/>
            <person name="Berndorff D."/>
            <person name="Goessner R."/>
            <person name="Tauber R."/>
        </authorList>
    </citation>
    <scope>NUCLEOTIDE SEQUENCE [MRNA]</scope>
    <scope>VARIANT THR-446</scope>
</reference>
<reference key="3">
    <citation type="journal article" date="2006" name="Nature">
        <title>DNA sequence and analysis of human chromosome 8.</title>
        <authorList>
            <person name="Nusbaum C."/>
            <person name="Mikkelsen T.S."/>
            <person name="Zody M.C."/>
            <person name="Asakawa S."/>
            <person name="Taudien S."/>
            <person name="Garber M."/>
            <person name="Kodira C.D."/>
            <person name="Schueler M.G."/>
            <person name="Shimizu A."/>
            <person name="Whittaker C.A."/>
            <person name="Chang J.L."/>
            <person name="Cuomo C.A."/>
            <person name="Dewar K."/>
            <person name="FitzGerald M.G."/>
            <person name="Yang X."/>
            <person name="Allen N.R."/>
            <person name="Anderson S."/>
            <person name="Asakawa T."/>
            <person name="Blechschmidt K."/>
            <person name="Bloom T."/>
            <person name="Borowsky M.L."/>
            <person name="Butler J."/>
            <person name="Cook A."/>
            <person name="Corum B."/>
            <person name="DeArellano K."/>
            <person name="DeCaprio D."/>
            <person name="Dooley K.T."/>
            <person name="Dorris L. III"/>
            <person name="Engels R."/>
            <person name="Gloeckner G."/>
            <person name="Hafez N."/>
            <person name="Hagopian D.S."/>
            <person name="Hall J.L."/>
            <person name="Ishikawa S.K."/>
            <person name="Jaffe D.B."/>
            <person name="Kamat A."/>
            <person name="Kudoh J."/>
            <person name="Lehmann R."/>
            <person name="Lokitsang T."/>
            <person name="Macdonald P."/>
            <person name="Major J.E."/>
            <person name="Matthews C.D."/>
            <person name="Mauceli E."/>
            <person name="Menzel U."/>
            <person name="Mihalev A.H."/>
            <person name="Minoshima S."/>
            <person name="Murayama Y."/>
            <person name="Naylor J.W."/>
            <person name="Nicol R."/>
            <person name="Nguyen C."/>
            <person name="O'Leary S.B."/>
            <person name="O'Neill K."/>
            <person name="Parker S.C.J."/>
            <person name="Polley A."/>
            <person name="Raymond C.K."/>
            <person name="Reichwald K."/>
            <person name="Rodriguez J."/>
            <person name="Sasaki T."/>
            <person name="Schilhabel M."/>
            <person name="Siddiqui R."/>
            <person name="Smith C.L."/>
            <person name="Sneddon T.P."/>
            <person name="Talamas J.A."/>
            <person name="Tenzin P."/>
            <person name="Topham K."/>
            <person name="Venkataraman V."/>
            <person name="Wen G."/>
            <person name="Yamazaki S."/>
            <person name="Young S.K."/>
            <person name="Zeng Q."/>
            <person name="Zimmer A.R."/>
            <person name="Rosenthal A."/>
            <person name="Birren B.W."/>
            <person name="Platzer M."/>
            <person name="Shimizu N."/>
            <person name="Lander E.S."/>
        </authorList>
    </citation>
    <scope>NUCLEOTIDE SEQUENCE [LARGE SCALE GENOMIC DNA]</scope>
</reference>
<reference key="4">
    <citation type="journal article" date="2004" name="Genome Res.">
        <title>The status, quality, and expansion of the NIH full-length cDNA project: the Mammalian Gene Collection (MGC).</title>
        <authorList>
            <consortium name="The MGC Project Team"/>
        </authorList>
    </citation>
    <scope>NUCLEOTIDE SEQUENCE [LARGE SCALE MRNA]</scope>
    <scope>VARIANTS GLU-115 AND ASP-734</scope>
    <source>
        <tissue>Cerebellum</tissue>
    </source>
</reference>
<protein>
    <recommendedName>
        <fullName>Cadherin-17</fullName>
    </recommendedName>
    <alternativeName>
        <fullName>Intestinal peptide-associated transporter HPT-1</fullName>
    </alternativeName>
    <alternativeName>
        <fullName>Liver-intestine cadherin</fullName>
        <shortName>LI-cadherin</shortName>
    </alternativeName>
</protein>
<proteinExistence type="evidence at protein level"/>
<evidence type="ECO:0000250" key="1"/>
<evidence type="ECO:0000255" key="2"/>
<evidence type="ECO:0000255" key="3">
    <source>
        <dbReference type="PROSITE-ProRule" id="PRU00043"/>
    </source>
</evidence>
<evidence type="ECO:0000269" key="4">
    <source>
    </source>
</evidence>
<evidence type="ECO:0000269" key="5">
    <source>
    </source>
</evidence>
<evidence type="ECO:0000269" key="6">
    <source ref="2"/>
</evidence>
<evidence type="ECO:0000305" key="7"/>
<evidence type="ECO:0007829" key="8">
    <source>
        <dbReference type="PDB" id="6ULM"/>
    </source>
</evidence>
<evidence type="ECO:0007829" key="9">
    <source>
        <dbReference type="PDB" id="7CYM"/>
    </source>
</evidence>
<evidence type="ECO:0007829" key="10">
    <source>
        <dbReference type="PDB" id="7EV1"/>
    </source>
</evidence>
<dbReference type="EMBL" id="U07969">
    <property type="protein sequence ID" value="AAA19021.1"/>
    <property type="molecule type" value="mRNA"/>
</dbReference>
<dbReference type="EMBL" id="X83228">
    <property type="protein sequence ID" value="CAA58231.1"/>
    <property type="molecule type" value="mRNA"/>
</dbReference>
<dbReference type="EMBL" id="AP003351">
    <property type="status" value="NOT_ANNOTATED_CDS"/>
    <property type="molecule type" value="Genomic_DNA"/>
</dbReference>
<dbReference type="EMBL" id="AP003478">
    <property type="status" value="NOT_ANNOTATED_CDS"/>
    <property type="molecule type" value="Genomic_DNA"/>
</dbReference>
<dbReference type="EMBL" id="BC112013">
    <property type="protein sequence ID" value="AAI12014.1"/>
    <property type="molecule type" value="mRNA"/>
</dbReference>
<dbReference type="EMBL" id="BC113464">
    <property type="protein sequence ID" value="AAI13465.1"/>
    <property type="molecule type" value="mRNA"/>
</dbReference>
<dbReference type="CCDS" id="CCDS6260.1"/>
<dbReference type="PIR" id="S55396">
    <property type="entry name" value="S55396"/>
</dbReference>
<dbReference type="RefSeq" id="NP_001138135.1">
    <property type="nucleotide sequence ID" value="NM_001144663.2"/>
</dbReference>
<dbReference type="RefSeq" id="NP_001400881.1">
    <property type="nucleotide sequence ID" value="NM_001413952.1"/>
</dbReference>
<dbReference type="RefSeq" id="NP_001400882.1">
    <property type="nucleotide sequence ID" value="NM_001413953.1"/>
</dbReference>
<dbReference type="RefSeq" id="NP_004054.3">
    <property type="nucleotide sequence ID" value="NM_004063.3"/>
</dbReference>
<dbReference type="PDB" id="6ULM">
    <property type="method" value="X-ray"/>
    <property type="resolution" value="2.15 A"/>
    <property type="chains" value="A/B=23-241"/>
</dbReference>
<dbReference type="PDB" id="7CYM">
    <property type="method" value="X-ray"/>
    <property type="resolution" value="2.70 A"/>
    <property type="chains" value="A/B=23-441"/>
</dbReference>
<dbReference type="PDB" id="7EV1">
    <property type="method" value="X-ray"/>
    <property type="resolution" value="1.38 A"/>
    <property type="chains" value="A/B=29-236"/>
</dbReference>
<dbReference type="PDBsum" id="6ULM"/>
<dbReference type="PDBsum" id="7CYM"/>
<dbReference type="PDBsum" id="7EV1"/>
<dbReference type="SMR" id="Q12864"/>
<dbReference type="BioGRID" id="107450">
    <property type="interactions" value="8"/>
</dbReference>
<dbReference type="FunCoup" id="Q12864">
    <property type="interactions" value="77"/>
</dbReference>
<dbReference type="IntAct" id="Q12864">
    <property type="interactions" value="7"/>
</dbReference>
<dbReference type="STRING" id="9606.ENSP00000027335"/>
<dbReference type="GlyCosmos" id="Q12864">
    <property type="glycosylation" value="8 sites, No reported glycans"/>
</dbReference>
<dbReference type="GlyGen" id="Q12864">
    <property type="glycosylation" value="9 sites, 5 N-linked glycans (2 sites)"/>
</dbReference>
<dbReference type="iPTMnet" id="Q12864"/>
<dbReference type="PhosphoSitePlus" id="Q12864"/>
<dbReference type="BioMuta" id="CDH17"/>
<dbReference type="DMDM" id="308153624"/>
<dbReference type="jPOST" id="Q12864"/>
<dbReference type="MassIVE" id="Q12864"/>
<dbReference type="PaxDb" id="9606-ENSP00000027335"/>
<dbReference type="PeptideAtlas" id="Q12864"/>
<dbReference type="ProteomicsDB" id="58991"/>
<dbReference type="ABCD" id="Q12864">
    <property type="antibodies" value="14 sequenced antibodies"/>
</dbReference>
<dbReference type="Antibodypedia" id="12841">
    <property type="antibodies" value="621 antibodies from 44 providers"/>
</dbReference>
<dbReference type="DNASU" id="1015"/>
<dbReference type="Ensembl" id="ENST00000027335.8">
    <property type="protein sequence ID" value="ENSP00000027335.3"/>
    <property type="gene ID" value="ENSG00000079112.10"/>
</dbReference>
<dbReference type="Ensembl" id="ENST00000450165.6">
    <property type="protein sequence ID" value="ENSP00000401468.2"/>
    <property type="gene ID" value="ENSG00000079112.10"/>
</dbReference>
<dbReference type="GeneID" id="1015"/>
<dbReference type="KEGG" id="hsa:1015"/>
<dbReference type="MANE-Select" id="ENST00000027335.8">
    <property type="protein sequence ID" value="ENSP00000027335.3"/>
    <property type="RefSeq nucleotide sequence ID" value="NM_004063.4"/>
    <property type="RefSeq protein sequence ID" value="NP_004054.3"/>
</dbReference>
<dbReference type="UCSC" id="uc003ygh.3">
    <property type="organism name" value="human"/>
</dbReference>
<dbReference type="AGR" id="HGNC:1756"/>
<dbReference type="CTD" id="1015"/>
<dbReference type="DisGeNET" id="1015"/>
<dbReference type="GeneCards" id="CDH17"/>
<dbReference type="HGNC" id="HGNC:1756">
    <property type="gene designation" value="CDH17"/>
</dbReference>
<dbReference type="HPA" id="ENSG00000079112">
    <property type="expression patterns" value="Tissue enriched (intestine)"/>
</dbReference>
<dbReference type="MIM" id="603017">
    <property type="type" value="gene"/>
</dbReference>
<dbReference type="neXtProt" id="NX_Q12864"/>
<dbReference type="OpenTargets" id="ENSG00000079112"/>
<dbReference type="PharmGKB" id="PA26290"/>
<dbReference type="VEuPathDB" id="HostDB:ENSG00000079112"/>
<dbReference type="eggNOG" id="KOG3594">
    <property type="taxonomic scope" value="Eukaryota"/>
</dbReference>
<dbReference type="GeneTree" id="ENSGT00940000157655"/>
<dbReference type="HOGENOM" id="CLU_016170_0_0_1"/>
<dbReference type="InParanoid" id="Q12864"/>
<dbReference type="OMA" id="DVNNEMP"/>
<dbReference type="OrthoDB" id="9946173at2759"/>
<dbReference type="PAN-GO" id="Q12864">
    <property type="GO annotations" value="4 GO annotations based on evolutionary models"/>
</dbReference>
<dbReference type="PhylomeDB" id="Q12864"/>
<dbReference type="TreeFam" id="TF316817"/>
<dbReference type="PathwayCommons" id="Q12864"/>
<dbReference type="Reactome" id="R-HSA-418990">
    <property type="pathway name" value="Adherens junctions interactions"/>
</dbReference>
<dbReference type="SignaLink" id="Q12864"/>
<dbReference type="SIGNOR" id="Q12864"/>
<dbReference type="BioGRID-ORCS" id="1015">
    <property type="hits" value="10 hits in 1152 CRISPR screens"/>
</dbReference>
<dbReference type="ChiTaRS" id="CDH17">
    <property type="organism name" value="human"/>
</dbReference>
<dbReference type="GeneWiki" id="CDH17"/>
<dbReference type="GenomeRNAi" id="1015"/>
<dbReference type="Pharos" id="Q12864">
    <property type="development level" value="Tbio"/>
</dbReference>
<dbReference type="PRO" id="PR:Q12864"/>
<dbReference type="Proteomes" id="UP000005640">
    <property type="component" value="Chromosome 8"/>
</dbReference>
<dbReference type="RNAct" id="Q12864">
    <property type="molecule type" value="protein"/>
</dbReference>
<dbReference type="Bgee" id="ENSG00000079112">
    <property type="expression patterns" value="Expressed in colonic mucosa and 110 other cell types or tissues"/>
</dbReference>
<dbReference type="ExpressionAtlas" id="Q12864">
    <property type="expression patterns" value="baseline and differential"/>
</dbReference>
<dbReference type="GO" id="GO:0005912">
    <property type="term" value="C:adherens junction"/>
    <property type="evidence" value="ECO:0000318"/>
    <property type="project" value="GO_Central"/>
</dbReference>
<dbReference type="GO" id="GO:0016323">
    <property type="term" value="C:basolateral plasma membrane"/>
    <property type="evidence" value="ECO:0000314"/>
    <property type="project" value="UniProtKB"/>
</dbReference>
<dbReference type="GO" id="GO:0016342">
    <property type="term" value="C:catenin complex"/>
    <property type="evidence" value="ECO:0000318"/>
    <property type="project" value="GO_Central"/>
</dbReference>
<dbReference type="GO" id="GO:0030054">
    <property type="term" value="C:cell junction"/>
    <property type="evidence" value="ECO:0000314"/>
    <property type="project" value="HPA"/>
</dbReference>
<dbReference type="GO" id="GO:0009986">
    <property type="term" value="C:cell surface"/>
    <property type="evidence" value="ECO:0007669"/>
    <property type="project" value="Ensembl"/>
</dbReference>
<dbReference type="GO" id="GO:0005654">
    <property type="term" value="C:nucleoplasm"/>
    <property type="evidence" value="ECO:0000314"/>
    <property type="project" value="HPA"/>
</dbReference>
<dbReference type="GO" id="GO:0005886">
    <property type="term" value="C:plasma membrane"/>
    <property type="evidence" value="ECO:0000304"/>
    <property type="project" value="Reactome"/>
</dbReference>
<dbReference type="GO" id="GO:0008013">
    <property type="term" value="F:beta-catenin binding"/>
    <property type="evidence" value="ECO:0000318"/>
    <property type="project" value="GO_Central"/>
</dbReference>
<dbReference type="GO" id="GO:0045296">
    <property type="term" value="F:cadherin binding"/>
    <property type="evidence" value="ECO:0000318"/>
    <property type="project" value="GO_Central"/>
</dbReference>
<dbReference type="GO" id="GO:0005509">
    <property type="term" value="F:calcium ion binding"/>
    <property type="evidence" value="ECO:0007669"/>
    <property type="project" value="InterPro"/>
</dbReference>
<dbReference type="GO" id="GO:0005178">
    <property type="term" value="F:integrin binding"/>
    <property type="evidence" value="ECO:0000353"/>
    <property type="project" value="UniProtKB"/>
</dbReference>
<dbReference type="GO" id="GO:0005427">
    <property type="term" value="F:proton-dependent oligopeptide secondary active transmembrane transporter activity"/>
    <property type="evidence" value="ECO:0000250"/>
    <property type="project" value="UniProtKB"/>
</dbReference>
<dbReference type="GO" id="GO:0034332">
    <property type="term" value="P:adherens junction organization"/>
    <property type="evidence" value="ECO:0000318"/>
    <property type="project" value="GO_Central"/>
</dbReference>
<dbReference type="GO" id="GO:0016339">
    <property type="term" value="P:calcium-dependent cell-cell adhesion via plasma membrane cell adhesion molecules"/>
    <property type="evidence" value="ECO:0000250"/>
    <property type="project" value="UniProtKB"/>
</dbReference>
<dbReference type="GO" id="GO:0007155">
    <property type="term" value="P:cell adhesion"/>
    <property type="evidence" value="ECO:0000304"/>
    <property type="project" value="ProtInc"/>
</dbReference>
<dbReference type="GO" id="GO:0016477">
    <property type="term" value="P:cell migration"/>
    <property type="evidence" value="ECO:0000318"/>
    <property type="project" value="GO_Central"/>
</dbReference>
<dbReference type="GO" id="GO:0000902">
    <property type="term" value="P:cell morphogenesis"/>
    <property type="evidence" value="ECO:0000318"/>
    <property type="project" value="GO_Central"/>
</dbReference>
<dbReference type="GO" id="GO:0044331">
    <property type="term" value="P:cell-cell adhesion mediated by cadherin"/>
    <property type="evidence" value="ECO:0000318"/>
    <property type="project" value="GO_Central"/>
</dbReference>
<dbReference type="GO" id="GO:0007043">
    <property type="term" value="P:cell-cell junction assembly"/>
    <property type="evidence" value="ECO:0000318"/>
    <property type="project" value="GO_Central"/>
</dbReference>
<dbReference type="GO" id="GO:0002314">
    <property type="term" value="P:germinal center B cell differentiation"/>
    <property type="evidence" value="ECO:0007669"/>
    <property type="project" value="Ensembl"/>
</dbReference>
<dbReference type="GO" id="GO:0007156">
    <property type="term" value="P:homophilic cell adhesion via plasma membrane adhesion molecules"/>
    <property type="evidence" value="ECO:0000250"/>
    <property type="project" value="UniProtKB"/>
</dbReference>
<dbReference type="GO" id="GO:0007229">
    <property type="term" value="P:integrin-mediated signaling pathway"/>
    <property type="evidence" value="ECO:0000315"/>
    <property type="project" value="UniProtKB"/>
</dbReference>
<dbReference type="GO" id="GO:0002315">
    <property type="term" value="P:marginal zone B cell differentiation"/>
    <property type="evidence" value="ECO:0007669"/>
    <property type="project" value="Ensembl"/>
</dbReference>
<dbReference type="GO" id="GO:0035672">
    <property type="term" value="P:oligopeptide transmembrane transport"/>
    <property type="evidence" value="ECO:0000250"/>
    <property type="project" value="UniProtKB"/>
</dbReference>
<dbReference type="GO" id="GO:0033626">
    <property type="term" value="P:positive regulation of integrin activation by cell surface receptor linked signal transduction"/>
    <property type="evidence" value="ECO:0000315"/>
    <property type="project" value="UniProtKB"/>
</dbReference>
<dbReference type="GO" id="GO:0048536">
    <property type="term" value="P:spleen development"/>
    <property type="evidence" value="ECO:0007669"/>
    <property type="project" value="Ensembl"/>
</dbReference>
<dbReference type="CDD" id="cd11304">
    <property type="entry name" value="Cadherin_repeat"/>
    <property type="match status" value="6"/>
</dbReference>
<dbReference type="FunFam" id="2.60.40.60:FF:000151">
    <property type="entry name" value="Cadherin 17"/>
    <property type="match status" value="1"/>
</dbReference>
<dbReference type="FunFam" id="2.60.40.60:FF:000152">
    <property type="entry name" value="Cadherin 17"/>
    <property type="match status" value="1"/>
</dbReference>
<dbReference type="FunFam" id="2.60.40.60:FF:000163">
    <property type="entry name" value="Cadherin 17"/>
    <property type="match status" value="1"/>
</dbReference>
<dbReference type="FunFam" id="2.60.40.60:FF:000169">
    <property type="entry name" value="Cadherin 17"/>
    <property type="match status" value="1"/>
</dbReference>
<dbReference type="FunFam" id="2.60.40.60:FF:000183">
    <property type="entry name" value="Cadherin 17"/>
    <property type="match status" value="1"/>
</dbReference>
<dbReference type="FunFam" id="2.60.40.60:FF:000188">
    <property type="entry name" value="Cadherin 17"/>
    <property type="match status" value="1"/>
</dbReference>
<dbReference type="FunFam" id="2.60.40.60:FF:000212">
    <property type="entry name" value="Cadherin 17"/>
    <property type="match status" value="1"/>
</dbReference>
<dbReference type="Gene3D" id="2.60.40.60">
    <property type="entry name" value="Cadherins"/>
    <property type="match status" value="7"/>
</dbReference>
<dbReference type="InterPro" id="IPR039808">
    <property type="entry name" value="Cadherin"/>
</dbReference>
<dbReference type="InterPro" id="IPR002126">
    <property type="entry name" value="Cadherin-like_dom"/>
</dbReference>
<dbReference type="InterPro" id="IPR015919">
    <property type="entry name" value="Cadherin-like_sf"/>
</dbReference>
<dbReference type="InterPro" id="IPR020894">
    <property type="entry name" value="Cadherin_CS"/>
</dbReference>
<dbReference type="PANTHER" id="PTHR24027:SF419">
    <property type="entry name" value="CADHERIN-17"/>
    <property type="match status" value="1"/>
</dbReference>
<dbReference type="PANTHER" id="PTHR24027">
    <property type="entry name" value="CADHERIN-23"/>
    <property type="match status" value="1"/>
</dbReference>
<dbReference type="Pfam" id="PF00028">
    <property type="entry name" value="Cadherin"/>
    <property type="match status" value="5"/>
</dbReference>
<dbReference type="PRINTS" id="PR00205">
    <property type="entry name" value="CADHERIN"/>
</dbReference>
<dbReference type="SMART" id="SM00112">
    <property type="entry name" value="CA"/>
    <property type="match status" value="6"/>
</dbReference>
<dbReference type="SUPFAM" id="SSF49313">
    <property type="entry name" value="Cadherin-like"/>
    <property type="match status" value="7"/>
</dbReference>
<dbReference type="PROSITE" id="PS00232">
    <property type="entry name" value="CADHERIN_1"/>
    <property type="match status" value="3"/>
</dbReference>
<dbReference type="PROSITE" id="PS50268">
    <property type="entry name" value="CADHERIN_2"/>
    <property type="match status" value="6"/>
</dbReference>